<protein>
    <recommendedName>
        <fullName evidence="1">Putative adenylate kinase</fullName>
        <shortName evidence="1">AK</shortName>
        <ecNumber evidence="1">2.7.4.3</ecNumber>
    </recommendedName>
    <alternativeName>
        <fullName evidence="1">ATP-AMP transphosphorylase</fullName>
    </alternativeName>
</protein>
<comment type="function">
    <text evidence="1">Broad-specificity nucleoside monophosphate (NMP) kinase that catalyzes the reversible transfer of the terminal phosphate group between nucleoside triphosphates and monophosphates. Also has ATPase activity. Involved in the late maturation steps of the 30S ribosomal particles, specifically 16S rRNA maturation. While NMP activity is not required for ribosome maturation, ATPase activity is. Associates transiently with small ribosomal subunit protein uS11. ATP hydrolysis breaks the interaction with uS11. May temporarily remove uS11 from the ribosome to enable a conformational change of the ribosomal RNA that is needed for the final maturation step of the small ribosomal subunit.</text>
</comment>
<comment type="catalytic activity">
    <reaction evidence="1">
        <text>AMP + ATP = 2 ADP</text>
        <dbReference type="Rhea" id="RHEA:12973"/>
        <dbReference type="ChEBI" id="CHEBI:30616"/>
        <dbReference type="ChEBI" id="CHEBI:456215"/>
        <dbReference type="ChEBI" id="CHEBI:456216"/>
        <dbReference type="EC" id="2.7.4.3"/>
    </reaction>
</comment>
<comment type="catalytic activity">
    <reaction evidence="1">
        <text>ATP + H2O = ADP + phosphate + H(+)</text>
        <dbReference type="Rhea" id="RHEA:13065"/>
        <dbReference type="ChEBI" id="CHEBI:15377"/>
        <dbReference type="ChEBI" id="CHEBI:15378"/>
        <dbReference type="ChEBI" id="CHEBI:30616"/>
        <dbReference type="ChEBI" id="CHEBI:43474"/>
        <dbReference type="ChEBI" id="CHEBI:456216"/>
    </reaction>
</comment>
<comment type="subunit">
    <text evidence="1">Interacts with uS11. Not a structural component of 40S pre-ribosomes, but transiently interacts with them by binding to uS11.</text>
</comment>
<comment type="similarity">
    <text evidence="1">Belongs to the adenylate kinase family. AK6 subfamily.</text>
</comment>
<accession>Q8PZ69</accession>
<keyword id="KW-0067">ATP-binding</keyword>
<keyword id="KW-0418">Kinase</keyword>
<keyword id="KW-0547">Nucleotide-binding</keyword>
<keyword id="KW-0690">Ribosome biogenesis</keyword>
<keyword id="KW-0698">rRNA processing</keyword>
<keyword id="KW-0808">Transferase</keyword>
<organism>
    <name type="scientific">Methanosarcina mazei (strain ATCC BAA-159 / DSM 3647 / Goe1 / Go1 / JCM 11833 / OCM 88)</name>
    <name type="common">Methanosarcina frisia</name>
    <dbReference type="NCBI Taxonomy" id="192952"/>
    <lineage>
        <taxon>Archaea</taxon>
        <taxon>Methanobacteriati</taxon>
        <taxon>Methanobacteriota</taxon>
        <taxon>Stenosarchaea group</taxon>
        <taxon>Methanomicrobia</taxon>
        <taxon>Methanosarcinales</taxon>
        <taxon>Methanosarcinaceae</taxon>
        <taxon>Methanosarcina</taxon>
    </lineage>
</organism>
<gene>
    <name type="ordered locus">MM_0625</name>
</gene>
<reference key="1">
    <citation type="journal article" date="2002" name="J. Mol. Microbiol. Biotechnol.">
        <title>The genome of Methanosarcina mazei: evidence for lateral gene transfer between Bacteria and Archaea.</title>
        <authorList>
            <person name="Deppenmeier U."/>
            <person name="Johann A."/>
            <person name="Hartsch T."/>
            <person name="Merkl R."/>
            <person name="Schmitz R.A."/>
            <person name="Martinez-Arias R."/>
            <person name="Henne A."/>
            <person name="Wiezer A."/>
            <person name="Baeumer S."/>
            <person name="Jacobi C."/>
            <person name="Brueggemann H."/>
            <person name="Lienard T."/>
            <person name="Christmann A."/>
            <person name="Boemecke M."/>
            <person name="Steckel S."/>
            <person name="Bhattacharyya A."/>
            <person name="Lykidis A."/>
            <person name="Overbeek R."/>
            <person name="Klenk H.-P."/>
            <person name="Gunsalus R.P."/>
            <person name="Fritz H.-J."/>
            <person name="Gottschalk G."/>
        </authorList>
    </citation>
    <scope>NUCLEOTIDE SEQUENCE [LARGE SCALE GENOMIC DNA]</scope>
    <source>
        <strain>ATCC BAA-159 / DSM 3647 / Goe1 / Go1 / JCM 11833 / OCM 88</strain>
    </source>
</reference>
<feature type="chain" id="PRO_0000153908" description="Putative adenylate kinase">
    <location>
        <begin position="1"/>
        <end position="196"/>
    </location>
</feature>
<feature type="region of interest" description="NMP" evidence="1">
    <location>
        <begin position="30"/>
        <end position="53"/>
    </location>
</feature>
<feature type="region of interest" description="LID" evidence="1">
    <location>
        <begin position="118"/>
        <end position="128"/>
    </location>
</feature>
<feature type="binding site" evidence="1">
    <location>
        <position position="10"/>
    </location>
    <ligand>
        <name>ATP</name>
        <dbReference type="ChEBI" id="CHEBI:30616"/>
    </ligand>
</feature>
<feature type="binding site" evidence="1">
    <location>
        <position position="12"/>
    </location>
    <ligand>
        <name>ATP</name>
        <dbReference type="ChEBI" id="CHEBI:30616"/>
    </ligand>
</feature>
<feature type="binding site" evidence="1">
    <location>
        <position position="13"/>
    </location>
    <ligand>
        <name>ATP</name>
        <dbReference type="ChEBI" id="CHEBI:30616"/>
    </ligand>
</feature>
<feature type="binding site" evidence="1">
    <location>
        <position position="14"/>
    </location>
    <ligand>
        <name>ATP</name>
        <dbReference type="ChEBI" id="CHEBI:30616"/>
    </ligand>
</feature>
<feature type="binding site" evidence="1">
    <location>
        <position position="15"/>
    </location>
    <ligand>
        <name>ATP</name>
        <dbReference type="ChEBI" id="CHEBI:30616"/>
    </ligand>
</feature>
<feature type="binding site" evidence="1">
    <location>
        <position position="119"/>
    </location>
    <ligand>
        <name>ATP</name>
        <dbReference type="ChEBI" id="CHEBI:30616"/>
    </ligand>
</feature>
<evidence type="ECO:0000255" key="1">
    <source>
        <dbReference type="HAMAP-Rule" id="MF_00039"/>
    </source>
</evidence>
<dbReference type="EC" id="2.7.4.3" evidence="1"/>
<dbReference type="EMBL" id="AE008384">
    <property type="protein sequence ID" value="AAM30321.1"/>
    <property type="molecule type" value="Genomic_DNA"/>
</dbReference>
<dbReference type="RefSeq" id="WP_011032576.1">
    <property type="nucleotide sequence ID" value="NC_003901.1"/>
</dbReference>
<dbReference type="SMR" id="Q8PZ69"/>
<dbReference type="KEGG" id="mma:MM_0625"/>
<dbReference type="PATRIC" id="fig|192952.21.peg.737"/>
<dbReference type="eggNOG" id="arCOG01038">
    <property type="taxonomic scope" value="Archaea"/>
</dbReference>
<dbReference type="HOGENOM" id="CLU_079096_0_1_2"/>
<dbReference type="Proteomes" id="UP000000595">
    <property type="component" value="Chromosome"/>
</dbReference>
<dbReference type="GO" id="GO:0004017">
    <property type="term" value="F:adenylate kinase activity"/>
    <property type="evidence" value="ECO:0007669"/>
    <property type="project" value="UniProtKB-UniRule"/>
</dbReference>
<dbReference type="GO" id="GO:0005524">
    <property type="term" value="F:ATP binding"/>
    <property type="evidence" value="ECO:0007669"/>
    <property type="project" value="UniProtKB-UniRule"/>
</dbReference>
<dbReference type="GO" id="GO:0016887">
    <property type="term" value="F:ATP hydrolysis activity"/>
    <property type="evidence" value="ECO:0007669"/>
    <property type="project" value="InterPro"/>
</dbReference>
<dbReference type="GO" id="GO:0042274">
    <property type="term" value="P:ribosomal small subunit biogenesis"/>
    <property type="evidence" value="ECO:0007669"/>
    <property type="project" value="UniProtKB-UniRule"/>
</dbReference>
<dbReference type="GO" id="GO:0006364">
    <property type="term" value="P:rRNA processing"/>
    <property type="evidence" value="ECO:0007669"/>
    <property type="project" value="UniProtKB-KW"/>
</dbReference>
<dbReference type="Gene3D" id="3.40.50.300">
    <property type="entry name" value="P-loop containing nucleotide triphosphate hydrolases"/>
    <property type="match status" value="1"/>
</dbReference>
<dbReference type="HAMAP" id="MF_00039">
    <property type="entry name" value="Adenylate_kinase_AK6"/>
    <property type="match status" value="1"/>
</dbReference>
<dbReference type="InterPro" id="IPR020618">
    <property type="entry name" value="Adenyl_kinase_AK6"/>
</dbReference>
<dbReference type="InterPro" id="IPR027417">
    <property type="entry name" value="P-loop_NTPase"/>
</dbReference>
<dbReference type="PANTHER" id="PTHR12595:SF0">
    <property type="entry name" value="ADENYLATE KINASE ISOENZYME 6"/>
    <property type="match status" value="1"/>
</dbReference>
<dbReference type="PANTHER" id="PTHR12595">
    <property type="entry name" value="POS9-ACTIVATING FACTOR FAP7-RELATED"/>
    <property type="match status" value="1"/>
</dbReference>
<dbReference type="Pfam" id="PF13238">
    <property type="entry name" value="AAA_18"/>
    <property type="match status" value="1"/>
</dbReference>
<dbReference type="SUPFAM" id="SSF52540">
    <property type="entry name" value="P-loop containing nucleoside triphosphate hydrolases"/>
    <property type="match status" value="1"/>
</dbReference>
<name>KAD6_METMA</name>
<sequence length="196" mass="22343">MLIGLTGTPGTGKTSVSKLLEKRRGWKVVYLNDLIKEEHLYSEVDEERDSVIADMELIRERLSGILEEEKGQHAEKAKVNGEEKENITIIESHLAHYITDIVIVLRAYPPELKKRLEKRGYSEEKINENAEAESIDLILAEAFEWCKKVFEVNTTGRTAEETLGDVEKIIDYILAGKENELQEYIPGSLDWIDSVP</sequence>
<proteinExistence type="inferred from homology"/>